<accession>P41337</accession>
<name>PAHO_LARAR</name>
<keyword id="KW-0027">Amidation</keyword>
<keyword id="KW-0903">Direct protein sequencing</keyword>
<keyword id="KW-0372">Hormone</keyword>
<keyword id="KW-0964">Secreted</keyword>
<evidence type="ECO:0000250" key="1"/>
<evidence type="ECO:0000250" key="2">
    <source>
        <dbReference type="UniProtKB" id="P01298"/>
    </source>
</evidence>
<evidence type="ECO:0000303" key="3">
    <source>
    </source>
</evidence>
<evidence type="ECO:0000305" key="4"/>
<gene>
    <name type="primary">PPY</name>
</gene>
<sequence length="36" mass="4237">GPVQPTYPGDDAPVEDLVRFYNDLQQYLNVVTRHRY</sequence>
<comment type="function">
    <text evidence="2">Hormone secreted by pancreatic cells that acts as a regulator of pancreatic and gastrointestinal functions.</text>
</comment>
<comment type="subcellular location">
    <subcellularLocation>
        <location evidence="2">Secreted</location>
    </subcellularLocation>
</comment>
<comment type="similarity">
    <text evidence="4">Belongs to the NPY family.</text>
</comment>
<feature type="peptide" id="PRO_0000044804" description="Pancreatic polypeptide">
    <location>
        <begin position="1"/>
        <end position="36"/>
    </location>
</feature>
<feature type="modified residue" description="Tyrosine amide" evidence="1">
    <location>
        <position position="36"/>
    </location>
</feature>
<reference key="1">
    <citation type="journal article" date="1994" name="Gen. Comp. Endocrinol.">
        <title>Isolation and structural characterisation of herring gull (Larus argentatus) pancreatic polypeptide.</title>
        <authorList>
            <person name="Barton C.L."/>
            <person name="Shaw C."/>
            <person name="Halton D.W."/>
            <person name="Thim L."/>
        </authorList>
    </citation>
    <scope>PROTEIN SEQUENCE</scope>
    <source>
        <tissue>Pancreas</tissue>
    </source>
</reference>
<organism>
    <name type="scientific">Larus argentatus</name>
    <name type="common">Herring gull</name>
    <dbReference type="NCBI Taxonomy" id="35669"/>
    <lineage>
        <taxon>Eukaryota</taxon>
        <taxon>Metazoa</taxon>
        <taxon>Chordata</taxon>
        <taxon>Craniata</taxon>
        <taxon>Vertebrata</taxon>
        <taxon>Euteleostomi</taxon>
        <taxon>Archelosauria</taxon>
        <taxon>Archosauria</taxon>
        <taxon>Dinosauria</taxon>
        <taxon>Saurischia</taxon>
        <taxon>Theropoda</taxon>
        <taxon>Coelurosauria</taxon>
        <taxon>Aves</taxon>
        <taxon>Neognathae</taxon>
        <taxon>Neoaves</taxon>
        <taxon>Charadriiformes</taxon>
        <taxon>Laridae</taxon>
        <taxon>Larus</taxon>
    </lineage>
</organism>
<dbReference type="SMR" id="P41337"/>
<dbReference type="GO" id="GO:0005615">
    <property type="term" value="C:extracellular space"/>
    <property type="evidence" value="ECO:0007669"/>
    <property type="project" value="TreeGrafter"/>
</dbReference>
<dbReference type="GO" id="GO:0005184">
    <property type="term" value="F:neuropeptide hormone activity"/>
    <property type="evidence" value="ECO:0007669"/>
    <property type="project" value="TreeGrafter"/>
</dbReference>
<dbReference type="GO" id="GO:0031841">
    <property type="term" value="F:neuropeptide Y receptor binding"/>
    <property type="evidence" value="ECO:0007669"/>
    <property type="project" value="TreeGrafter"/>
</dbReference>
<dbReference type="GO" id="GO:0007631">
    <property type="term" value="P:feeding behavior"/>
    <property type="evidence" value="ECO:0007669"/>
    <property type="project" value="TreeGrafter"/>
</dbReference>
<dbReference type="GO" id="GO:0007218">
    <property type="term" value="P:neuropeptide signaling pathway"/>
    <property type="evidence" value="ECO:0007669"/>
    <property type="project" value="TreeGrafter"/>
</dbReference>
<dbReference type="CDD" id="cd00126">
    <property type="entry name" value="PAH"/>
    <property type="match status" value="1"/>
</dbReference>
<dbReference type="Gene3D" id="6.10.250.900">
    <property type="match status" value="1"/>
</dbReference>
<dbReference type="InterPro" id="IPR001955">
    <property type="entry name" value="Pancreatic_hormone-like"/>
</dbReference>
<dbReference type="InterPro" id="IPR020392">
    <property type="entry name" value="Pancreatic_hormone-like_CS"/>
</dbReference>
<dbReference type="PANTHER" id="PTHR10533">
    <property type="entry name" value="NEUROPEPTIDE Y/PANCREATIC HORMONE/PEPTIDE YY"/>
    <property type="match status" value="1"/>
</dbReference>
<dbReference type="PANTHER" id="PTHR10533:SF5">
    <property type="entry name" value="PRO-NEUROPEPTIDE Y"/>
    <property type="match status" value="1"/>
</dbReference>
<dbReference type="Pfam" id="PF00159">
    <property type="entry name" value="Hormone_3"/>
    <property type="match status" value="1"/>
</dbReference>
<dbReference type="PRINTS" id="PR00278">
    <property type="entry name" value="PANCHORMONE"/>
</dbReference>
<dbReference type="SMART" id="SM00309">
    <property type="entry name" value="PAH"/>
    <property type="match status" value="1"/>
</dbReference>
<dbReference type="PROSITE" id="PS00265">
    <property type="entry name" value="PANCREATIC_HORMONE_1"/>
    <property type="match status" value="1"/>
</dbReference>
<dbReference type="PROSITE" id="PS50276">
    <property type="entry name" value="PANCREATIC_HORMONE_2"/>
    <property type="match status" value="1"/>
</dbReference>
<protein>
    <recommendedName>
        <fullName evidence="3">Pancreatic polypeptide</fullName>
        <shortName evidence="3">PP</shortName>
    </recommendedName>
</protein>
<proteinExistence type="evidence at protein level"/>